<gene>
    <name evidence="1" type="primary">nuoI</name>
    <name type="ordered locus">SPO2770</name>
</gene>
<comment type="function">
    <text evidence="1">NDH-1 shuttles electrons from NADH, via FMN and iron-sulfur (Fe-S) centers, to quinones in the respiratory chain. The immediate electron acceptor for the enzyme in this species is believed to be ubiquinone. Couples the redox reaction to proton translocation (for every two electrons transferred, four hydrogen ions are translocated across the cytoplasmic membrane), and thus conserves the redox energy in a proton gradient.</text>
</comment>
<comment type="catalytic activity">
    <reaction evidence="1">
        <text>a quinone + NADH + 5 H(+)(in) = a quinol + NAD(+) + 4 H(+)(out)</text>
        <dbReference type="Rhea" id="RHEA:57888"/>
        <dbReference type="ChEBI" id="CHEBI:15378"/>
        <dbReference type="ChEBI" id="CHEBI:24646"/>
        <dbReference type="ChEBI" id="CHEBI:57540"/>
        <dbReference type="ChEBI" id="CHEBI:57945"/>
        <dbReference type="ChEBI" id="CHEBI:132124"/>
    </reaction>
</comment>
<comment type="cofactor">
    <cofactor evidence="1">
        <name>[4Fe-4S] cluster</name>
        <dbReference type="ChEBI" id="CHEBI:49883"/>
    </cofactor>
    <text evidence="1">Binds 2 [4Fe-4S] clusters per subunit.</text>
</comment>
<comment type="subunit">
    <text evidence="1">NDH-1 is composed of 14 different subunits. Subunits NuoA, H, J, K, L, M, N constitute the membrane sector of the complex.</text>
</comment>
<comment type="subcellular location">
    <subcellularLocation>
        <location evidence="1">Cell inner membrane</location>
        <topology evidence="1">Peripheral membrane protein</topology>
    </subcellularLocation>
</comment>
<comment type="similarity">
    <text evidence="1">Belongs to the complex I 23 kDa subunit family.</text>
</comment>
<feature type="chain" id="PRO_0000250944" description="NADH-quinone oxidoreductase subunit I">
    <location>
        <begin position="1"/>
        <end position="164"/>
    </location>
</feature>
<feature type="domain" description="4Fe-4S ferredoxin-type 1" evidence="1">
    <location>
        <begin position="55"/>
        <end position="85"/>
    </location>
</feature>
<feature type="domain" description="4Fe-4S ferredoxin-type 2" evidence="1">
    <location>
        <begin position="95"/>
        <end position="124"/>
    </location>
</feature>
<feature type="binding site" evidence="1">
    <location>
        <position position="65"/>
    </location>
    <ligand>
        <name>[4Fe-4S] cluster</name>
        <dbReference type="ChEBI" id="CHEBI:49883"/>
        <label>1</label>
    </ligand>
</feature>
<feature type="binding site" evidence="1">
    <location>
        <position position="68"/>
    </location>
    <ligand>
        <name>[4Fe-4S] cluster</name>
        <dbReference type="ChEBI" id="CHEBI:49883"/>
        <label>1</label>
    </ligand>
</feature>
<feature type="binding site" evidence="1">
    <location>
        <position position="71"/>
    </location>
    <ligand>
        <name>[4Fe-4S] cluster</name>
        <dbReference type="ChEBI" id="CHEBI:49883"/>
        <label>1</label>
    </ligand>
</feature>
<feature type="binding site" evidence="1">
    <location>
        <position position="75"/>
    </location>
    <ligand>
        <name>[4Fe-4S] cluster</name>
        <dbReference type="ChEBI" id="CHEBI:49883"/>
        <label>2</label>
    </ligand>
</feature>
<feature type="binding site" evidence="1">
    <location>
        <position position="104"/>
    </location>
    <ligand>
        <name>[4Fe-4S] cluster</name>
        <dbReference type="ChEBI" id="CHEBI:49883"/>
        <label>2</label>
    </ligand>
</feature>
<feature type="binding site" evidence="1">
    <location>
        <position position="107"/>
    </location>
    <ligand>
        <name>[4Fe-4S] cluster</name>
        <dbReference type="ChEBI" id="CHEBI:49883"/>
        <label>2</label>
    </ligand>
</feature>
<feature type="binding site" evidence="1">
    <location>
        <position position="110"/>
    </location>
    <ligand>
        <name>[4Fe-4S] cluster</name>
        <dbReference type="ChEBI" id="CHEBI:49883"/>
        <label>2</label>
    </ligand>
</feature>
<feature type="binding site" evidence="1">
    <location>
        <position position="114"/>
    </location>
    <ligand>
        <name>[4Fe-4S] cluster</name>
        <dbReference type="ChEBI" id="CHEBI:49883"/>
        <label>1</label>
    </ligand>
</feature>
<sequence length="164" mass="19042">MTQIDYTRAAKYFLLQDFWVGMKLGLKYFFSPKATINYPHEKGPLSPRFRGEHALRRYPNGEERCIACKLCEAICPAQAITIDAEPREDGSRRTTRYDIDMTKCIYCGFCQEACPVDAIVEGPNFEFATETREELFYDKEKLLSNGDRWEAEIARNLELDAPYR</sequence>
<name>NUOI_RUEPO</name>
<evidence type="ECO:0000255" key="1">
    <source>
        <dbReference type="HAMAP-Rule" id="MF_01351"/>
    </source>
</evidence>
<proteinExistence type="inferred from homology"/>
<protein>
    <recommendedName>
        <fullName evidence="1">NADH-quinone oxidoreductase subunit I</fullName>
        <ecNumber evidence="1">7.1.1.-</ecNumber>
    </recommendedName>
    <alternativeName>
        <fullName evidence="1">NADH dehydrogenase I subunit I</fullName>
    </alternativeName>
    <alternativeName>
        <fullName evidence="1">NDH-1 subunit I</fullName>
    </alternativeName>
</protein>
<accession>Q5LPS9</accession>
<organism>
    <name type="scientific">Ruegeria pomeroyi (strain ATCC 700808 / DSM 15171 / DSS-3)</name>
    <name type="common">Silicibacter pomeroyi</name>
    <dbReference type="NCBI Taxonomy" id="246200"/>
    <lineage>
        <taxon>Bacteria</taxon>
        <taxon>Pseudomonadati</taxon>
        <taxon>Pseudomonadota</taxon>
        <taxon>Alphaproteobacteria</taxon>
        <taxon>Rhodobacterales</taxon>
        <taxon>Roseobacteraceae</taxon>
        <taxon>Ruegeria</taxon>
    </lineage>
</organism>
<reference key="1">
    <citation type="journal article" date="2004" name="Nature">
        <title>Genome sequence of Silicibacter pomeroyi reveals adaptations to the marine environment.</title>
        <authorList>
            <person name="Moran M.A."/>
            <person name="Buchan A."/>
            <person name="Gonzalez J.M."/>
            <person name="Heidelberg J.F."/>
            <person name="Whitman W.B."/>
            <person name="Kiene R.P."/>
            <person name="Henriksen J.R."/>
            <person name="King G.M."/>
            <person name="Belas R."/>
            <person name="Fuqua C."/>
            <person name="Brinkac L.M."/>
            <person name="Lewis M."/>
            <person name="Johri S."/>
            <person name="Weaver B."/>
            <person name="Pai G."/>
            <person name="Eisen J.A."/>
            <person name="Rahe E."/>
            <person name="Sheldon W.M."/>
            <person name="Ye W."/>
            <person name="Miller T.R."/>
            <person name="Carlton J."/>
            <person name="Rasko D.A."/>
            <person name="Paulsen I.T."/>
            <person name="Ren Q."/>
            <person name="Daugherty S.C."/>
            <person name="DeBoy R.T."/>
            <person name="Dodson R.J."/>
            <person name="Durkin A.S."/>
            <person name="Madupu R."/>
            <person name="Nelson W.C."/>
            <person name="Sullivan S.A."/>
            <person name="Rosovitz M.J."/>
            <person name="Haft D.H."/>
            <person name="Selengut J."/>
            <person name="Ward N."/>
        </authorList>
    </citation>
    <scope>NUCLEOTIDE SEQUENCE [LARGE SCALE GENOMIC DNA]</scope>
    <source>
        <strain>ATCC 700808 / DSM 15171 / DSS-3</strain>
    </source>
</reference>
<reference key="2">
    <citation type="journal article" date="2014" name="Stand. Genomic Sci.">
        <title>An updated genome annotation for the model marine bacterium Ruegeria pomeroyi DSS-3.</title>
        <authorList>
            <person name="Rivers A.R."/>
            <person name="Smith C.B."/>
            <person name="Moran M.A."/>
        </authorList>
    </citation>
    <scope>GENOME REANNOTATION</scope>
    <source>
        <strain>ATCC 700808 / DSM 15171 / DSS-3</strain>
    </source>
</reference>
<keyword id="KW-0004">4Fe-4S</keyword>
<keyword id="KW-0997">Cell inner membrane</keyword>
<keyword id="KW-1003">Cell membrane</keyword>
<keyword id="KW-0408">Iron</keyword>
<keyword id="KW-0411">Iron-sulfur</keyword>
<keyword id="KW-0472">Membrane</keyword>
<keyword id="KW-0479">Metal-binding</keyword>
<keyword id="KW-0520">NAD</keyword>
<keyword id="KW-0874">Quinone</keyword>
<keyword id="KW-1185">Reference proteome</keyword>
<keyword id="KW-0677">Repeat</keyword>
<keyword id="KW-1278">Translocase</keyword>
<keyword id="KW-0830">Ubiquinone</keyword>
<dbReference type="EC" id="7.1.1.-" evidence="1"/>
<dbReference type="EMBL" id="CP000031">
    <property type="protein sequence ID" value="AAV96011.1"/>
    <property type="molecule type" value="Genomic_DNA"/>
</dbReference>
<dbReference type="RefSeq" id="WP_011048469.1">
    <property type="nucleotide sequence ID" value="NC_003911.12"/>
</dbReference>
<dbReference type="SMR" id="Q5LPS9"/>
<dbReference type="STRING" id="246200.SPO2770"/>
<dbReference type="PaxDb" id="246200-SPO2770"/>
<dbReference type="KEGG" id="sil:SPO2770"/>
<dbReference type="eggNOG" id="COG1143">
    <property type="taxonomic scope" value="Bacteria"/>
</dbReference>
<dbReference type="HOGENOM" id="CLU_067218_5_1_5"/>
<dbReference type="OrthoDB" id="9808559at2"/>
<dbReference type="Proteomes" id="UP000001023">
    <property type="component" value="Chromosome"/>
</dbReference>
<dbReference type="GO" id="GO:0005886">
    <property type="term" value="C:plasma membrane"/>
    <property type="evidence" value="ECO:0007669"/>
    <property type="project" value="UniProtKB-SubCell"/>
</dbReference>
<dbReference type="GO" id="GO:0051539">
    <property type="term" value="F:4 iron, 4 sulfur cluster binding"/>
    <property type="evidence" value="ECO:0007669"/>
    <property type="project" value="UniProtKB-KW"/>
</dbReference>
<dbReference type="GO" id="GO:0005506">
    <property type="term" value="F:iron ion binding"/>
    <property type="evidence" value="ECO:0007669"/>
    <property type="project" value="UniProtKB-UniRule"/>
</dbReference>
<dbReference type="GO" id="GO:0050136">
    <property type="term" value="F:NADH:ubiquinone reductase (non-electrogenic) activity"/>
    <property type="evidence" value="ECO:0007669"/>
    <property type="project" value="UniProtKB-UniRule"/>
</dbReference>
<dbReference type="GO" id="GO:0048038">
    <property type="term" value="F:quinone binding"/>
    <property type="evidence" value="ECO:0007669"/>
    <property type="project" value="UniProtKB-KW"/>
</dbReference>
<dbReference type="GO" id="GO:0009060">
    <property type="term" value="P:aerobic respiration"/>
    <property type="evidence" value="ECO:0007669"/>
    <property type="project" value="TreeGrafter"/>
</dbReference>
<dbReference type="FunFam" id="3.30.70.3270:FF:000001">
    <property type="entry name" value="NADH-quinone oxidoreductase subunit I 1"/>
    <property type="match status" value="1"/>
</dbReference>
<dbReference type="Gene3D" id="3.30.70.3270">
    <property type="match status" value="1"/>
</dbReference>
<dbReference type="HAMAP" id="MF_01351">
    <property type="entry name" value="NDH1_NuoI"/>
    <property type="match status" value="1"/>
</dbReference>
<dbReference type="InterPro" id="IPR017896">
    <property type="entry name" value="4Fe4S_Fe-S-bd"/>
</dbReference>
<dbReference type="InterPro" id="IPR017900">
    <property type="entry name" value="4Fe4S_Fe_S_CS"/>
</dbReference>
<dbReference type="InterPro" id="IPR010226">
    <property type="entry name" value="NADH_quinone_OxRdtase_chainI"/>
</dbReference>
<dbReference type="NCBIfam" id="TIGR01971">
    <property type="entry name" value="NuoI"/>
    <property type="match status" value="1"/>
</dbReference>
<dbReference type="NCBIfam" id="NF004538">
    <property type="entry name" value="PRK05888.1-4"/>
    <property type="match status" value="1"/>
</dbReference>
<dbReference type="NCBIfam" id="NF004539">
    <property type="entry name" value="PRK05888.1-5"/>
    <property type="match status" value="1"/>
</dbReference>
<dbReference type="PANTHER" id="PTHR10849:SF20">
    <property type="entry name" value="NADH DEHYDROGENASE [UBIQUINONE] IRON-SULFUR PROTEIN 8, MITOCHONDRIAL"/>
    <property type="match status" value="1"/>
</dbReference>
<dbReference type="PANTHER" id="PTHR10849">
    <property type="entry name" value="NADH DEHYDROGENASE UBIQUINONE IRON-SULFUR PROTEIN 8, MITOCHONDRIAL"/>
    <property type="match status" value="1"/>
</dbReference>
<dbReference type="Pfam" id="PF12838">
    <property type="entry name" value="Fer4_7"/>
    <property type="match status" value="1"/>
</dbReference>
<dbReference type="SUPFAM" id="SSF54862">
    <property type="entry name" value="4Fe-4S ferredoxins"/>
    <property type="match status" value="1"/>
</dbReference>
<dbReference type="PROSITE" id="PS00198">
    <property type="entry name" value="4FE4S_FER_1"/>
    <property type="match status" value="2"/>
</dbReference>
<dbReference type="PROSITE" id="PS51379">
    <property type="entry name" value="4FE4S_FER_2"/>
    <property type="match status" value="2"/>
</dbReference>